<evidence type="ECO:0000255" key="1">
    <source>
        <dbReference type="HAMAP-Rule" id="MF_00225"/>
    </source>
</evidence>
<sequence>MYQLFRHGIFQMDAEKAHDFTIQCLKLAGNPLFQPILKSLIHAPKGFPKTVMGVNFPNPIGLAAGADKNGDAIDGFGALGFGFLEVGTVTPVAQDGNAKPRQFRLIEAEGIINRNGFNNNGIDYLIENVKNARYKGVIGINIGKNKFTPLEQGKDDYIFCLNKAYNYAGYITVNISSPNTPDLRQLQYGDYFDDLLRSIKDRQAILANQYNKYVPIAVKIAPDLTESELVQIADTLVRHKMDGVIATNTTISRDTVMGMKNAEQQGGLSGKPLQHKSTEIIKRLHQELKGQIPIIGSGGIDGLQNAQEKIEAGAELLQVYSGLIYHGPKLVKELVKNIK</sequence>
<comment type="function">
    <text evidence="1">Catalyzes the conversion of dihydroorotate to orotate with quinone as electron acceptor.</text>
</comment>
<comment type="catalytic activity">
    <reaction evidence="1">
        <text>(S)-dihydroorotate + a quinone = orotate + a quinol</text>
        <dbReference type="Rhea" id="RHEA:30187"/>
        <dbReference type="ChEBI" id="CHEBI:24646"/>
        <dbReference type="ChEBI" id="CHEBI:30839"/>
        <dbReference type="ChEBI" id="CHEBI:30864"/>
        <dbReference type="ChEBI" id="CHEBI:132124"/>
        <dbReference type="EC" id="1.3.5.2"/>
    </reaction>
</comment>
<comment type="cofactor">
    <cofactor evidence="1">
        <name>FMN</name>
        <dbReference type="ChEBI" id="CHEBI:58210"/>
    </cofactor>
    <text evidence="1">Binds 1 FMN per subunit.</text>
</comment>
<comment type="pathway">
    <text evidence="1">Pyrimidine metabolism; UMP biosynthesis via de novo pathway; orotate from (S)-dihydroorotate (quinone route): step 1/1.</text>
</comment>
<comment type="subunit">
    <text evidence="1">Monomer.</text>
</comment>
<comment type="subcellular location">
    <subcellularLocation>
        <location evidence="1">Cell membrane</location>
        <topology evidence="1">Peripheral membrane protein</topology>
    </subcellularLocation>
</comment>
<comment type="similarity">
    <text evidence="1">Belongs to the dihydroorotate dehydrogenase family. Type 2 subfamily.</text>
</comment>
<protein>
    <recommendedName>
        <fullName evidence="1">Dihydroorotate dehydrogenase (quinone)</fullName>
        <ecNumber evidence="1">1.3.5.2</ecNumber>
    </recommendedName>
    <alternativeName>
        <fullName evidence="1">DHOdehase</fullName>
        <shortName evidence="1">DHOD</shortName>
        <shortName evidence="1">DHODase</shortName>
    </alternativeName>
    <alternativeName>
        <fullName evidence="1">Dihydroorotate oxidase</fullName>
    </alternativeName>
</protein>
<dbReference type="EC" id="1.3.5.2" evidence="1"/>
<dbReference type="EMBL" id="CP000672">
    <property type="protein sequence ID" value="ABQ99253.1"/>
    <property type="molecule type" value="Genomic_DNA"/>
</dbReference>
<dbReference type="SMR" id="A5UEP8"/>
<dbReference type="KEGG" id="hiq:CGSHiGG_00770"/>
<dbReference type="HOGENOM" id="CLU_013640_2_0_6"/>
<dbReference type="UniPathway" id="UPA00070">
    <property type="reaction ID" value="UER00946"/>
</dbReference>
<dbReference type="Proteomes" id="UP000001990">
    <property type="component" value="Chromosome"/>
</dbReference>
<dbReference type="GO" id="GO:0005737">
    <property type="term" value="C:cytoplasm"/>
    <property type="evidence" value="ECO:0007669"/>
    <property type="project" value="InterPro"/>
</dbReference>
<dbReference type="GO" id="GO:0005886">
    <property type="term" value="C:plasma membrane"/>
    <property type="evidence" value="ECO:0007669"/>
    <property type="project" value="UniProtKB-SubCell"/>
</dbReference>
<dbReference type="GO" id="GO:0106430">
    <property type="term" value="F:dihydroorotate dehydrogenase (quinone) activity"/>
    <property type="evidence" value="ECO:0007669"/>
    <property type="project" value="UniProtKB-EC"/>
</dbReference>
<dbReference type="GO" id="GO:0006207">
    <property type="term" value="P:'de novo' pyrimidine nucleobase biosynthetic process"/>
    <property type="evidence" value="ECO:0007669"/>
    <property type="project" value="InterPro"/>
</dbReference>
<dbReference type="GO" id="GO:0044205">
    <property type="term" value="P:'de novo' UMP biosynthetic process"/>
    <property type="evidence" value="ECO:0007669"/>
    <property type="project" value="UniProtKB-UniRule"/>
</dbReference>
<dbReference type="CDD" id="cd04738">
    <property type="entry name" value="DHOD_2_like"/>
    <property type="match status" value="1"/>
</dbReference>
<dbReference type="FunFam" id="3.20.20.70:FF:000028">
    <property type="entry name" value="Dihydroorotate dehydrogenase (quinone)"/>
    <property type="match status" value="1"/>
</dbReference>
<dbReference type="Gene3D" id="3.20.20.70">
    <property type="entry name" value="Aldolase class I"/>
    <property type="match status" value="1"/>
</dbReference>
<dbReference type="HAMAP" id="MF_00225">
    <property type="entry name" value="DHO_dh_type2"/>
    <property type="match status" value="1"/>
</dbReference>
<dbReference type="InterPro" id="IPR013785">
    <property type="entry name" value="Aldolase_TIM"/>
</dbReference>
<dbReference type="InterPro" id="IPR050074">
    <property type="entry name" value="DHO_dehydrogenase"/>
</dbReference>
<dbReference type="InterPro" id="IPR012135">
    <property type="entry name" value="Dihydroorotate_DH_1_2"/>
</dbReference>
<dbReference type="InterPro" id="IPR005719">
    <property type="entry name" value="Dihydroorotate_DH_2"/>
</dbReference>
<dbReference type="InterPro" id="IPR005720">
    <property type="entry name" value="Dihydroorotate_DH_cat"/>
</dbReference>
<dbReference type="InterPro" id="IPR001295">
    <property type="entry name" value="Dihydroorotate_DH_CS"/>
</dbReference>
<dbReference type="NCBIfam" id="NF003644">
    <property type="entry name" value="PRK05286.1-1"/>
    <property type="match status" value="1"/>
</dbReference>
<dbReference type="NCBIfam" id="NF003645">
    <property type="entry name" value="PRK05286.1-2"/>
    <property type="match status" value="1"/>
</dbReference>
<dbReference type="NCBIfam" id="NF003646">
    <property type="entry name" value="PRK05286.1-4"/>
    <property type="match status" value="1"/>
</dbReference>
<dbReference type="NCBIfam" id="NF003652">
    <property type="entry name" value="PRK05286.2-5"/>
    <property type="match status" value="1"/>
</dbReference>
<dbReference type="NCBIfam" id="TIGR01036">
    <property type="entry name" value="pyrD_sub2"/>
    <property type="match status" value="1"/>
</dbReference>
<dbReference type="PANTHER" id="PTHR48109:SF4">
    <property type="entry name" value="DIHYDROOROTATE DEHYDROGENASE (QUINONE), MITOCHONDRIAL"/>
    <property type="match status" value="1"/>
</dbReference>
<dbReference type="PANTHER" id="PTHR48109">
    <property type="entry name" value="DIHYDROOROTATE DEHYDROGENASE (QUINONE), MITOCHONDRIAL-RELATED"/>
    <property type="match status" value="1"/>
</dbReference>
<dbReference type="Pfam" id="PF01180">
    <property type="entry name" value="DHO_dh"/>
    <property type="match status" value="1"/>
</dbReference>
<dbReference type="PIRSF" id="PIRSF000164">
    <property type="entry name" value="DHO_oxidase"/>
    <property type="match status" value="1"/>
</dbReference>
<dbReference type="SUPFAM" id="SSF51395">
    <property type="entry name" value="FMN-linked oxidoreductases"/>
    <property type="match status" value="1"/>
</dbReference>
<dbReference type="PROSITE" id="PS00911">
    <property type="entry name" value="DHODEHASE_1"/>
    <property type="match status" value="1"/>
</dbReference>
<dbReference type="PROSITE" id="PS00912">
    <property type="entry name" value="DHODEHASE_2"/>
    <property type="match status" value="1"/>
</dbReference>
<keyword id="KW-1003">Cell membrane</keyword>
<keyword id="KW-0285">Flavoprotein</keyword>
<keyword id="KW-0288">FMN</keyword>
<keyword id="KW-0472">Membrane</keyword>
<keyword id="KW-0560">Oxidoreductase</keyword>
<keyword id="KW-0665">Pyrimidine biosynthesis</keyword>
<feature type="chain" id="PRO_1000024177" description="Dihydroorotate dehydrogenase (quinone)">
    <location>
        <begin position="1"/>
        <end position="339"/>
    </location>
</feature>
<feature type="active site" description="Nucleophile" evidence="1">
    <location>
        <position position="177"/>
    </location>
</feature>
<feature type="binding site" evidence="1">
    <location>
        <begin position="64"/>
        <end position="68"/>
    </location>
    <ligand>
        <name>FMN</name>
        <dbReference type="ChEBI" id="CHEBI:58210"/>
    </ligand>
</feature>
<feature type="binding site" evidence="1">
    <location>
        <position position="68"/>
    </location>
    <ligand>
        <name>substrate</name>
    </ligand>
</feature>
<feature type="binding site" evidence="1">
    <location>
        <position position="88"/>
    </location>
    <ligand>
        <name>FMN</name>
        <dbReference type="ChEBI" id="CHEBI:58210"/>
    </ligand>
</feature>
<feature type="binding site" evidence="1">
    <location>
        <begin position="113"/>
        <end position="117"/>
    </location>
    <ligand>
        <name>substrate</name>
    </ligand>
</feature>
<feature type="binding site" evidence="1">
    <location>
        <position position="141"/>
    </location>
    <ligand>
        <name>FMN</name>
        <dbReference type="ChEBI" id="CHEBI:58210"/>
    </ligand>
</feature>
<feature type="binding site" evidence="1">
    <location>
        <position position="174"/>
    </location>
    <ligand>
        <name>FMN</name>
        <dbReference type="ChEBI" id="CHEBI:58210"/>
    </ligand>
</feature>
<feature type="binding site" evidence="1">
    <location>
        <position position="174"/>
    </location>
    <ligand>
        <name>substrate</name>
    </ligand>
</feature>
<feature type="binding site" evidence="1">
    <location>
        <position position="179"/>
    </location>
    <ligand>
        <name>substrate</name>
    </ligand>
</feature>
<feature type="binding site" evidence="1">
    <location>
        <position position="219"/>
    </location>
    <ligand>
        <name>FMN</name>
        <dbReference type="ChEBI" id="CHEBI:58210"/>
    </ligand>
</feature>
<feature type="binding site" evidence="1">
    <location>
        <position position="247"/>
    </location>
    <ligand>
        <name>FMN</name>
        <dbReference type="ChEBI" id="CHEBI:58210"/>
    </ligand>
</feature>
<feature type="binding site" evidence="1">
    <location>
        <begin position="248"/>
        <end position="249"/>
    </location>
    <ligand>
        <name>substrate</name>
    </ligand>
</feature>
<feature type="binding site" evidence="1">
    <location>
        <position position="270"/>
    </location>
    <ligand>
        <name>FMN</name>
        <dbReference type="ChEBI" id="CHEBI:58210"/>
    </ligand>
</feature>
<feature type="binding site" evidence="1">
    <location>
        <position position="299"/>
    </location>
    <ligand>
        <name>FMN</name>
        <dbReference type="ChEBI" id="CHEBI:58210"/>
    </ligand>
</feature>
<feature type="binding site" evidence="1">
    <location>
        <begin position="320"/>
        <end position="321"/>
    </location>
    <ligand>
        <name>FMN</name>
        <dbReference type="ChEBI" id="CHEBI:58210"/>
    </ligand>
</feature>
<name>PYRD_HAEIG</name>
<gene>
    <name evidence="1" type="primary">pyrD</name>
    <name type="ordered locus">CGSHiGG_00770</name>
</gene>
<accession>A5UEP8</accession>
<reference key="1">
    <citation type="journal article" date="2007" name="Genome Biol.">
        <title>Characterization and modeling of the Haemophilus influenzae core and supragenomes based on the complete genomic sequences of Rd and 12 clinical nontypeable strains.</title>
        <authorList>
            <person name="Hogg J.S."/>
            <person name="Hu F.Z."/>
            <person name="Janto B."/>
            <person name="Boissy R."/>
            <person name="Hayes J."/>
            <person name="Keefe R."/>
            <person name="Post J.C."/>
            <person name="Ehrlich G.D."/>
        </authorList>
    </citation>
    <scope>NUCLEOTIDE SEQUENCE [LARGE SCALE GENOMIC DNA]</scope>
    <source>
        <strain>PittGG</strain>
    </source>
</reference>
<proteinExistence type="inferred from homology"/>
<organism>
    <name type="scientific">Haemophilus influenzae (strain PittGG)</name>
    <dbReference type="NCBI Taxonomy" id="374931"/>
    <lineage>
        <taxon>Bacteria</taxon>
        <taxon>Pseudomonadati</taxon>
        <taxon>Pseudomonadota</taxon>
        <taxon>Gammaproteobacteria</taxon>
        <taxon>Pasteurellales</taxon>
        <taxon>Pasteurellaceae</taxon>
        <taxon>Haemophilus</taxon>
    </lineage>
</organism>